<name>EF1A2_BOVIN</name>
<accession>Q32PH8</accession>
<sequence length="463" mass="50470">MGKEKTHINIVVIGHVDSGKSTTTGHLIYKCGGIDKRTIEKFEKEAAEMGKGSFKYAWVLDKLKAERERGITIDISLWKFETTKYYITIIDAPGHRDFIKNMITGTSQADCAVLIVAAGVGEFEAGISKNGQTREHALLAYTLGVKQLIVGVNKMDSTEPAYSEKRYDEIVKEVSAYIKKIGYNPATVPFVPISGWHGDNMLEPSPNMPWFKGWKVERKEGNASGVSLLEALDTILPPTRPTDKPLRLPLQDVYKIGGIGTVPVGRVETGILRPGMVVTFAPVNITTEVKSVEMHHEALSEALPGDNVGFNVKNVSVKDIRRGNVCGDSKSDPPQEAAQFTSQVIILNHPGQISAGYSPVIDCHTAHIACKFAELKEKIDRRSGKKLEDNPKSLKSGDAAIVEMVPGKPMCVESFSQYPPLGRFAVRDMRQTVAVGVIKNVEKKSGGAGKVTKSAQKAQKAGK</sequence>
<dbReference type="EC" id="3.6.5.-" evidence="5"/>
<dbReference type="EMBL" id="BC108110">
    <property type="protein sequence ID" value="AAI08111.1"/>
    <property type="molecule type" value="mRNA"/>
</dbReference>
<dbReference type="RefSeq" id="NP_001032541.1">
    <property type="nucleotide sequence ID" value="NM_001037464.2"/>
</dbReference>
<dbReference type="RefSeq" id="XP_005214756.1">
    <property type="nucleotide sequence ID" value="XM_005214699.2"/>
</dbReference>
<dbReference type="SMR" id="Q32PH8"/>
<dbReference type="FunCoup" id="Q32PH8">
    <property type="interactions" value="1009"/>
</dbReference>
<dbReference type="STRING" id="9913.ENSBTAP00000028899"/>
<dbReference type="PaxDb" id="9913-ENSBTAP00000028899"/>
<dbReference type="PeptideAtlas" id="Q32PH8"/>
<dbReference type="Ensembl" id="ENSBTAT00000028899.5">
    <property type="protein sequence ID" value="ENSBTAP00000028899.3"/>
    <property type="gene ID" value="ENSBTAG00000021685.5"/>
</dbReference>
<dbReference type="GeneID" id="515233"/>
<dbReference type="KEGG" id="bta:515233"/>
<dbReference type="CTD" id="1917"/>
<dbReference type="VEuPathDB" id="HostDB:ENSBTAG00000021685"/>
<dbReference type="VGNC" id="VGNC:50164">
    <property type="gene designation" value="EEF1A2"/>
</dbReference>
<dbReference type="eggNOG" id="KOG0052">
    <property type="taxonomic scope" value="Eukaryota"/>
</dbReference>
<dbReference type="GeneTree" id="ENSGT00950000183029"/>
<dbReference type="HOGENOM" id="CLU_007265_3_5_1"/>
<dbReference type="InParanoid" id="Q32PH8"/>
<dbReference type="OMA" id="EMHHKSV"/>
<dbReference type="OrthoDB" id="342024at2759"/>
<dbReference type="TreeFam" id="TF300304"/>
<dbReference type="Proteomes" id="UP000009136">
    <property type="component" value="Chromosome 13"/>
</dbReference>
<dbReference type="Bgee" id="ENSBTAG00000021685">
    <property type="expression patterns" value="Expressed in laryngeal cartilage and 90 other cell types or tissues"/>
</dbReference>
<dbReference type="GO" id="GO:0005789">
    <property type="term" value="C:endoplasmic reticulum membrane"/>
    <property type="evidence" value="ECO:0000250"/>
    <property type="project" value="UniProtKB"/>
</dbReference>
<dbReference type="GO" id="GO:0005853">
    <property type="term" value="C:eukaryotic translation elongation factor 1 complex"/>
    <property type="evidence" value="ECO:0007669"/>
    <property type="project" value="Ensembl"/>
</dbReference>
<dbReference type="GO" id="GO:0005634">
    <property type="term" value="C:nucleus"/>
    <property type="evidence" value="ECO:0007669"/>
    <property type="project" value="UniProtKB-KW"/>
</dbReference>
<dbReference type="GO" id="GO:0045202">
    <property type="term" value="C:synapse"/>
    <property type="evidence" value="ECO:0007669"/>
    <property type="project" value="Ensembl"/>
</dbReference>
<dbReference type="GO" id="GO:0005525">
    <property type="term" value="F:GTP binding"/>
    <property type="evidence" value="ECO:0007669"/>
    <property type="project" value="UniProtKB-KW"/>
</dbReference>
<dbReference type="GO" id="GO:0003924">
    <property type="term" value="F:GTPase activity"/>
    <property type="evidence" value="ECO:0000250"/>
    <property type="project" value="UniProtKB"/>
</dbReference>
<dbReference type="GO" id="GO:0019901">
    <property type="term" value="F:protein kinase binding"/>
    <property type="evidence" value="ECO:0007669"/>
    <property type="project" value="Ensembl"/>
</dbReference>
<dbReference type="GO" id="GO:0003746">
    <property type="term" value="F:translation elongation factor activity"/>
    <property type="evidence" value="ECO:0000250"/>
    <property type="project" value="UniProtKB"/>
</dbReference>
<dbReference type="GO" id="GO:0043065">
    <property type="term" value="P:positive regulation of apoptotic process"/>
    <property type="evidence" value="ECO:0007669"/>
    <property type="project" value="Ensembl"/>
</dbReference>
<dbReference type="GO" id="GO:0006412">
    <property type="term" value="P:translation"/>
    <property type="evidence" value="ECO:0000318"/>
    <property type="project" value="GO_Central"/>
</dbReference>
<dbReference type="GO" id="GO:0006414">
    <property type="term" value="P:translational elongation"/>
    <property type="evidence" value="ECO:0000250"/>
    <property type="project" value="UniProtKB"/>
</dbReference>
<dbReference type="CDD" id="cd01883">
    <property type="entry name" value="EF1_alpha"/>
    <property type="match status" value="1"/>
</dbReference>
<dbReference type="CDD" id="cd03693">
    <property type="entry name" value="EF1_alpha_II"/>
    <property type="match status" value="1"/>
</dbReference>
<dbReference type="CDD" id="cd03705">
    <property type="entry name" value="EF1_alpha_III"/>
    <property type="match status" value="1"/>
</dbReference>
<dbReference type="FunFam" id="2.40.30.10:FF:000005">
    <property type="entry name" value="Elongation factor 1-alpha"/>
    <property type="match status" value="1"/>
</dbReference>
<dbReference type="FunFam" id="3.40.50.300:FF:000090">
    <property type="entry name" value="Elongation factor 1-alpha"/>
    <property type="match status" value="1"/>
</dbReference>
<dbReference type="FunFam" id="2.40.30.10:FF:000168">
    <property type="entry name" value="Elongation factor 1-alpha 2"/>
    <property type="match status" value="1"/>
</dbReference>
<dbReference type="Gene3D" id="3.40.50.300">
    <property type="entry name" value="P-loop containing nucleotide triphosphate hydrolases"/>
    <property type="match status" value="1"/>
</dbReference>
<dbReference type="Gene3D" id="2.40.30.10">
    <property type="entry name" value="Translation factors"/>
    <property type="match status" value="2"/>
</dbReference>
<dbReference type="HAMAP" id="MF_00118_A">
    <property type="entry name" value="EF_Tu_A"/>
    <property type="match status" value="1"/>
</dbReference>
<dbReference type="InterPro" id="IPR004161">
    <property type="entry name" value="EFTu-like_2"/>
</dbReference>
<dbReference type="InterPro" id="IPR031157">
    <property type="entry name" value="G_TR_CS"/>
</dbReference>
<dbReference type="InterPro" id="IPR054696">
    <property type="entry name" value="GTP-eEF1A_C"/>
</dbReference>
<dbReference type="InterPro" id="IPR027417">
    <property type="entry name" value="P-loop_NTPase"/>
</dbReference>
<dbReference type="InterPro" id="IPR000795">
    <property type="entry name" value="T_Tr_GTP-bd_dom"/>
</dbReference>
<dbReference type="InterPro" id="IPR050100">
    <property type="entry name" value="TRAFAC_GTPase_members"/>
</dbReference>
<dbReference type="InterPro" id="IPR009000">
    <property type="entry name" value="Transl_B-barrel_sf"/>
</dbReference>
<dbReference type="InterPro" id="IPR009001">
    <property type="entry name" value="Transl_elong_EF1A/Init_IF2_C"/>
</dbReference>
<dbReference type="InterPro" id="IPR004539">
    <property type="entry name" value="Transl_elong_EF1A_euk/arc"/>
</dbReference>
<dbReference type="NCBIfam" id="TIGR00483">
    <property type="entry name" value="EF-1_alpha"/>
    <property type="match status" value="1"/>
</dbReference>
<dbReference type="NCBIfam" id="NF008969">
    <property type="entry name" value="PRK12317.1"/>
    <property type="match status" value="1"/>
</dbReference>
<dbReference type="PANTHER" id="PTHR23115">
    <property type="entry name" value="TRANSLATION FACTOR"/>
    <property type="match status" value="1"/>
</dbReference>
<dbReference type="Pfam" id="PF22594">
    <property type="entry name" value="GTP-eEF1A_C"/>
    <property type="match status" value="1"/>
</dbReference>
<dbReference type="Pfam" id="PF00009">
    <property type="entry name" value="GTP_EFTU"/>
    <property type="match status" value="1"/>
</dbReference>
<dbReference type="Pfam" id="PF03144">
    <property type="entry name" value="GTP_EFTU_D2"/>
    <property type="match status" value="1"/>
</dbReference>
<dbReference type="PRINTS" id="PR00315">
    <property type="entry name" value="ELONGATNFCT"/>
</dbReference>
<dbReference type="SUPFAM" id="SSF50465">
    <property type="entry name" value="EF-Tu/eEF-1alpha/eIF2-gamma C-terminal domain"/>
    <property type="match status" value="1"/>
</dbReference>
<dbReference type="SUPFAM" id="SSF52540">
    <property type="entry name" value="P-loop containing nucleoside triphosphate hydrolases"/>
    <property type="match status" value="1"/>
</dbReference>
<dbReference type="SUPFAM" id="SSF50447">
    <property type="entry name" value="Translation proteins"/>
    <property type="match status" value="1"/>
</dbReference>
<dbReference type="PROSITE" id="PS00301">
    <property type="entry name" value="G_TR_1"/>
    <property type="match status" value="1"/>
</dbReference>
<dbReference type="PROSITE" id="PS51722">
    <property type="entry name" value="G_TR_2"/>
    <property type="match status" value="1"/>
</dbReference>
<gene>
    <name type="primary">EEF1A2</name>
</gene>
<organism>
    <name type="scientific">Bos taurus</name>
    <name type="common">Bovine</name>
    <dbReference type="NCBI Taxonomy" id="9913"/>
    <lineage>
        <taxon>Eukaryota</taxon>
        <taxon>Metazoa</taxon>
        <taxon>Chordata</taxon>
        <taxon>Craniata</taxon>
        <taxon>Vertebrata</taxon>
        <taxon>Euteleostomi</taxon>
        <taxon>Mammalia</taxon>
        <taxon>Eutheria</taxon>
        <taxon>Laurasiatheria</taxon>
        <taxon>Artiodactyla</taxon>
        <taxon>Ruminantia</taxon>
        <taxon>Pecora</taxon>
        <taxon>Bovidae</taxon>
        <taxon>Bovinae</taxon>
        <taxon>Bos</taxon>
    </lineage>
</organism>
<protein>
    <recommendedName>
        <fullName>Elongation factor 1-alpha 2</fullName>
        <shortName>EF-1-alpha-2</shortName>
        <ecNumber evidence="5">3.6.5.-</ecNumber>
    </recommendedName>
    <alternativeName>
        <fullName>Eukaryotic elongation factor 1 A-2</fullName>
        <shortName>eEF1A-2</shortName>
    </alternativeName>
</protein>
<comment type="function">
    <text evidence="3 5">Translation elongation factor that catalyzes the GTP-dependent binding of aminoacyl-tRNA (aa-tRNA) to the A-site of ribosomes during the elongation phase of protein synthesis. Base pairing between the mRNA codon and the aa-tRNA anticodon promotes GTP hydrolysis, releasing the aa-tRNA from EEF1A1 and allowing its accommodation into the ribosome (By similarity). The growing protein chain is subsequently transferred from the P-site peptidyl tRNA to the A-site aa-tRNA, extending it by one amino acid through ribosome-catalyzed peptide bond formation (By similarity).</text>
</comment>
<comment type="catalytic activity">
    <reaction evidence="5">
        <text>GTP + H2O = GDP + phosphate + H(+)</text>
        <dbReference type="Rhea" id="RHEA:19669"/>
        <dbReference type="ChEBI" id="CHEBI:15377"/>
        <dbReference type="ChEBI" id="CHEBI:15378"/>
        <dbReference type="ChEBI" id="CHEBI:37565"/>
        <dbReference type="ChEBI" id="CHEBI:43474"/>
        <dbReference type="ChEBI" id="CHEBI:58189"/>
    </reaction>
    <physiologicalReaction direction="left-to-right" evidence="5">
        <dbReference type="Rhea" id="RHEA:19670"/>
    </physiologicalReaction>
</comment>
<comment type="subunit">
    <text evidence="5">Homodimer; arranged in a 'head to tail' dimer configuration.</text>
</comment>
<comment type="subcellular location">
    <subcellularLocation>
        <location evidence="4">Endoplasmic reticulum membrane</location>
    </subcellularLocation>
</comment>
<comment type="PTM">
    <text evidence="4">Trimethylated at Lys-165 by EEF1AKMT3. Mono-, di-, and trimethylated at Lys-36 by EEF1AKMT4; trimethylated form is predominant. Methylation by EEF1AKMT4 contributes to the fine-tuning of translation rates for a subset of tRNAs. Trimethylated at the N-terminus and dimethylated at Lys-55 by METTL13.</text>
</comment>
<comment type="similarity">
    <text evidence="8">Belongs to the TRAFAC class translation factor GTPase superfamily. Classic translation factor GTPase family. EF-Tu/EF-1A subfamily.</text>
</comment>
<proteinExistence type="evidence at transcript level"/>
<feature type="initiator methionine" description="Removed" evidence="1">
    <location>
        <position position="1"/>
    </location>
</feature>
<feature type="chain" id="PRO_0000244875" description="Elongation factor 1-alpha 2">
    <location>
        <begin position="2"/>
        <end position="463"/>
    </location>
</feature>
<feature type="domain" description="tr-type G">
    <location>
        <begin position="5"/>
        <end position="242"/>
    </location>
</feature>
<feature type="region of interest" description="G1" evidence="6">
    <location>
        <begin position="14"/>
        <end position="21"/>
    </location>
</feature>
<feature type="region of interest" description="G2" evidence="6">
    <location>
        <begin position="70"/>
        <end position="74"/>
    </location>
</feature>
<feature type="region of interest" description="G3" evidence="6">
    <location>
        <begin position="91"/>
        <end position="94"/>
    </location>
</feature>
<feature type="region of interest" description="G4" evidence="6">
    <location>
        <begin position="153"/>
        <end position="156"/>
    </location>
</feature>
<feature type="region of interest" description="G5" evidence="6">
    <location>
        <begin position="194"/>
        <end position="196"/>
    </location>
</feature>
<feature type="region of interest" description="Disordered" evidence="7">
    <location>
        <begin position="444"/>
        <end position="463"/>
    </location>
</feature>
<feature type="binding site" evidence="5">
    <location>
        <position position="17"/>
    </location>
    <ligand>
        <name>GTP</name>
        <dbReference type="ChEBI" id="CHEBI:37565"/>
    </ligand>
</feature>
<feature type="binding site" evidence="5">
    <location>
        <position position="17"/>
    </location>
    <ligand>
        <name>Mg(2+)</name>
        <dbReference type="ChEBI" id="CHEBI:18420"/>
    </ligand>
</feature>
<feature type="binding site" evidence="5">
    <location>
        <position position="18"/>
    </location>
    <ligand>
        <name>GTP</name>
        <dbReference type="ChEBI" id="CHEBI:37565"/>
    </ligand>
</feature>
<feature type="binding site" evidence="5">
    <location>
        <position position="19"/>
    </location>
    <ligand>
        <name>GTP</name>
        <dbReference type="ChEBI" id="CHEBI:37565"/>
    </ligand>
</feature>
<feature type="binding site" evidence="5">
    <location>
        <position position="20"/>
    </location>
    <ligand>
        <name>GTP</name>
        <dbReference type="ChEBI" id="CHEBI:37565"/>
    </ligand>
</feature>
<feature type="binding site" evidence="5">
    <location>
        <position position="21"/>
    </location>
    <ligand>
        <name>GTP</name>
        <dbReference type="ChEBI" id="CHEBI:37565"/>
    </ligand>
</feature>
<feature type="binding site" evidence="5">
    <location>
        <position position="22"/>
    </location>
    <ligand>
        <name>GTP</name>
        <dbReference type="ChEBI" id="CHEBI:37565"/>
    </ligand>
</feature>
<feature type="binding site" evidence="5">
    <location>
        <position position="153"/>
    </location>
    <ligand>
        <name>GTP</name>
        <dbReference type="ChEBI" id="CHEBI:37565"/>
    </ligand>
</feature>
<feature type="binding site" evidence="5">
    <location>
        <position position="154"/>
    </location>
    <ligand>
        <name>GTP</name>
        <dbReference type="ChEBI" id="CHEBI:37565"/>
    </ligand>
</feature>
<feature type="binding site" evidence="5">
    <location>
        <position position="156"/>
    </location>
    <ligand>
        <name>GTP</name>
        <dbReference type="ChEBI" id="CHEBI:37565"/>
    </ligand>
</feature>
<feature type="binding site" evidence="5">
    <location>
        <position position="194"/>
    </location>
    <ligand>
        <name>GTP</name>
        <dbReference type="ChEBI" id="CHEBI:37565"/>
    </ligand>
</feature>
<feature type="binding site" evidence="5">
    <location>
        <position position="195"/>
    </location>
    <ligand>
        <name>GTP</name>
        <dbReference type="ChEBI" id="CHEBI:37565"/>
    </ligand>
</feature>
<feature type="binding site" evidence="5">
    <location>
        <position position="196"/>
    </location>
    <ligand>
        <name>GTP</name>
        <dbReference type="ChEBI" id="CHEBI:37565"/>
    </ligand>
</feature>
<feature type="modified residue" description="N,N,N-trimethylglycine" evidence="3">
    <location>
        <position position="2"/>
    </location>
</feature>
<feature type="modified residue" description="N6,N6,N6-trimethyllysine; alternate" evidence="4">
    <location>
        <position position="36"/>
    </location>
</feature>
<feature type="modified residue" description="N6,N6-dimethyllysine; alternate" evidence="4">
    <location>
        <position position="36"/>
    </location>
</feature>
<feature type="modified residue" description="N6-methyllysine; alternate" evidence="4">
    <location>
        <position position="36"/>
    </location>
</feature>
<feature type="modified residue" description="N6,N6,N6-trimethyllysine" evidence="5">
    <location>
        <position position="55"/>
    </location>
</feature>
<feature type="modified residue" description="N6,N6-dimethyllysine" evidence="4">
    <location>
        <position position="55"/>
    </location>
</feature>
<feature type="modified residue" description="N6,N6,N6-trimethyllysine" evidence="4">
    <location>
        <position position="79"/>
    </location>
</feature>
<feature type="modified residue" description="Phosphoserine" evidence="5">
    <location>
        <position position="163"/>
    </location>
</feature>
<feature type="modified residue" description="N6,N6,N6-trimethyllysine; alternate; by EEF1AKMT3" evidence="4">
    <location>
        <position position="165"/>
    </location>
</feature>
<feature type="modified residue" description="N6,N6-dimethyllysine; alternate" evidence="4">
    <location>
        <position position="165"/>
    </location>
</feature>
<feature type="modified residue" description="N6-methyllysine; alternate" evidence="4">
    <location>
        <position position="165"/>
    </location>
</feature>
<feature type="modified residue" description="N6-acetyllysine" evidence="4">
    <location>
        <position position="179"/>
    </location>
</feature>
<feature type="modified residue" description="Phosphoserine" evidence="2">
    <location>
        <position position="224"/>
    </location>
</feature>
<feature type="modified residue" description="Phosphothreonine" evidence="5">
    <location>
        <position position="239"/>
    </location>
</feature>
<feature type="modified residue" description="5-glutamyl glycerylphosphorylethanolamine" evidence="5">
    <location>
        <position position="301"/>
    </location>
</feature>
<feature type="modified residue" description="5-glutamyl glycerylphosphorylethanolamine" evidence="5">
    <location>
        <position position="374"/>
    </location>
</feature>
<feature type="modified residue" description="N6-acetyllysine" evidence="4">
    <location>
        <position position="439"/>
    </location>
</feature>
<reference key="1">
    <citation type="submission" date="2005-10" db="EMBL/GenBank/DDBJ databases">
        <authorList>
            <consortium name="NIH - Mammalian Gene Collection (MGC) project"/>
        </authorList>
    </citation>
    <scope>NUCLEOTIDE SEQUENCE [LARGE SCALE MRNA]</scope>
    <source>
        <strain>Hereford</strain>
        <tissue>Hypothalamus</tissue>
    </source>
</reference>
<evidence type="ECO:0000250" key="1">
    <source>
        <dbReference type="UniProtKB" id="P62631"/>
    </source>
</evidence>
<evidence type="ECO:0000250" key="2">
    <source>
        <dbReference type="UniProtKB" id="P62632"/>
    </source>
</evidence>
<evidence type="ECO:0000250" key="3">
    <source>
        <dbReference type="UniProtKB" id="P68104"/>
    </source>
</evidence>
<evidence type="ECO:0000250" key="4">
    <source>
        <dbReference type="UniProtKB" id="Q05639"/>
    </source>
</evidence>
<evidence type="ECO:0000250" key="5">
    <source>
        <dbReference type="UniProtKB" id="Q71V39"/>
    </source>
</evidence>
<evidence type="ECO:0000255" key="6"/>
<evidence type="ECO:0000256" key="7">
    <source>
        <dbReference type="SAM" id="MobiDB-lite"/>
    </source>
</evidence>
<evidence type="ECO:0000305" key="8"/>
<keyword id="KW-0007">Acetylation</keyword>
<keyword id="KW-0251">Elongation factor</keyword>
<keyword id="KW-0256">Endoplasmic reticulum</keyword>
<keyword id="KW-0342">GTP-binding</keyword>
<keyword id="KW-0378">Hydrolase</keyword>
<keyword id="KW-0460">Magnesium</keyword>
<keyword id="KW-0472">Membrane</keyword>
<keyword id="KW-0479">Metal-binding</keyword>
<keyword id="KW-0488">Methylation</keyword>
<keyword id="KW-0547">Nucleotide-binding</keyword>
<keyword id="KW-0597">Phosphoprotein</keyword>
<keyword id="KW-0648">Protein biosynthesis</keyword>
<keyword id="KW-1185">Reference proteome</keyword>